<comment type="function">
    <text>Core component of nucleosome which plays a central role in DNA double strand break (DSB) repair. Nucleosomes wrap and compact DNA into chromatin, limiting DNA accessibility to the cellular machineries which require DNA as a template. Histones thereby play a central role in transcription regulation, DNA repair, DNA replication and chromosomal stability. DNA accessibility is regulated via a complex set of post-translational modifications of histones, also called histone code, and nucleosome remodeling.</text>
</comment>
<comment type="subunit">
    <text>The nucleosome is a histone octamer containing two molecules each of H2A, H2B, H3 and H4 assembled in one H3-H4 heterotetramer and two H2A-H2B heterodimers. The octamer wraps approximately 147 bp of DNA.</text>
</comment>
<comment type="subcellular location">
    <subcellularLocation>
        <location>Nucleus</location>
    </subcellularLocation>
    <subcellularLocation>
        <location>Chromosome</location>
    </subcellularLocation>
</comment>
<comment type="domain">
    <text>The [ST]-Q motif constitutes a recognition sequence for kinases from the PI3/PI4-kinase family.</text>
</comment>
<comment type="PTM">
    <text evidence="1">Phosphorylated to form H2AS128ph (gamma-H2A) in response to DNA double-strand breaks (DSBs) generated by exogenous genotoxic agents and by stalled replication forks. Phosphorylation is dependent on the DNA damage checkpoint kinases MEC1/ATR and TEL1/ATM, spreads on either side of a detected DSB site and may mark the surrounding chromatin for recruitment of proteins required for DNA damage signaling and repair. Gamma-H2A is removed from the DNA prior to the strand invasion-primer extension step of the repair process and subsequently dephosphorylated by PPH3, a component of the histone H2A phosphatase complex (HTP-C). Dephosphorylation is necessary for efficient recovery from the DNA damage checkpoint (By similarity).</text>
</comment>
<comment type="PTM">
    <text evidence="1">Sumoylation on Lys-126 may lead to transcriptional repression.</text>
</comment>
<comment type="PTM">
    <text evidence="1">Acetylated by ESA1 to form H2AK4ac and H2AK7ac.</text>
</comment>
<comment type="miscellaneous">
    <text evidence="2">In contrast to vertebrates and insects, its C-terminus is not monoubiquitinated.</text>
</comment>
<comment type="similarity">
    <text evidence="2">Belongs to the histone H2A family.</text>
</comment>
<comment type="caution">
    <text evidence="2">To ensure consistency between histone entries, we follow the 'Brno' nomenclature for histone modifications, with positions referring to those used in the literature for the 'closest' model organism. Due to slight variations in histone sequences between organisms and to the presence of initiator methionine in UniProtKB/Swiss-Prot sequences, the actual positions of modified amino acids in the sequence generally differ. In this entry the following conventions are used: H2AK4ac = acetylated Lys-4; H2AK7ac = acetylated Lys-7; H2AS128ph = phosphorylated Ser-128.</text>
</comment>
<comment type="sequence caution" evidence="2">
    <conflict type="erroneous initiation">
        <sequence resource="EMBL-CDS" id="AAS54674"/>
    </conflict>
</comment>
<evidence type="ECO:0000250" key="1"/>
<evidence type="ECO:0000305" key="2"/>
<name>H2A1_EREGS</name>
<accession>Q74ZL4</accession>
<proteinExistence type="inferred from homology"/>
<sequence length="131" mass="13865">MSGKGGKAGSAAKASQSRSAKAGLTFPVGRVHRLLRKGNYAQRIGSGAPVYMTAVLEYLAAEILELAGNAARDNKKTRIIPRHLQLAIRNDDELNKLLGNVTIAQGGVLPNIHANLLPKKSAKATKASQEL</sequence>
<dbReference type="EMBL" id="AE016820">
    <property type="protein sequence ID" value="AAS54674.1"/>
    <property type="status" value="ALT_INIT"/>
    <property type="molecule type" value="Genomic_DNA"/>
</dbReference>
<dbReference type="RefSeq" id="NP_986850.1">
    <property type="nucleotide sequence ID" value="NM_211912.1"/>
</dbReference>
<dbReference type="SMR" id="Q74ZL4"/>
<dbReference type="FunCoup" id="Q74ZL4">
    <property type="interactions" value="1284"/>
</dbReference>
<dbReference type="STRING" id="284811.Q74ZL4"/>
<dbReference type="GeneID" id="4623152"/>
<dbReference type="KEGG" id="ago:AGOS_AGR184W"/>
<dbReference type="InParanoid" id="Q74ZL4"/>
<dbReference type="OrthoDB" id="4067082at2759"/>
<dbReference type="Proteomes" id="UP000000591">
    <property type="component" value="Chromosome VII"/>
</dbReference>
<dbReference type="GO" id="GO:0000786">
    <property type="term" value="C:nucleosome"/>
    <property type="evidence" value="ECO:0000318"/>
    <property type="project" value="GO_Central"/>
</dbReference>
<dbReference type="GO" id="GO:0005634">
    <property type="term" value="C:nucleus"/>
    <property type="evidence" value="ECO:0000318"/>
    <property type="project" value="GO_Central"/>
</dbReference>
<dbReference type="GO" id="GO:0003677">
    <property type="term" value="F:DNA binding"/>
    <property type="evidence" value="ECO:0007669"/>
    <property type="project" value="UniProtKB-KW"/>
</dbReference>
<dbReference type="GO" id="GO:0046982">
    <property type="term" value="F:protein heterodimerization activity"/>
    <property type="evidence" value="ECO:0007669"/>
    <property type="project" value="InterPro"/>
</dbReference>
<dbReference type="GO" id="GO:0030527">
    <property type="term" value="F:structural constituent of chromatin"/>
    <property type="evidence" value="ECO:0000318"/>
    <property type="project" value="GO_Central"/>
</dbReference>
<dbReference type="GO" id="GO:0006281">
    <property type="term" value="P:DNA repair"/>
    <property type="evidence" value="ECO:0007669"/>
    <property type="project" value="UniProtKB-KW"/>
</dbReference>
<dbReference type="GO" id="GO:0031507">
    <property type="term" value="P:heterochromatin formation"/>
    <property type="evidence" value="ECO:0000318"/>
    <property type="project" value="GO_Central"/>
</dbReference>
<dbReference type="CDD" id="cd00074">
    <property type="entry name" value="HFD_H2A"/>
    <property type="match status" value="1"/>
</dbReference>
<dbReference type="FunFam" id="1.10.20.10:FF:000008">
    <property type="entry name" value="Histone H2A"/>
    <property type="match status" value="1"/>
</dbReference>
<dbReference type="Gene3D" id="1.10.20.10">
    <property type="entry name" value="Histone, subunit A"/>
    <property type="match status" value="1"/>
</dbReference>
<dbReference type="InterPro" id="IPR009072">
    <property type="entry name" value="Histone-fold"/>
</dbReference>
<dbReference type="InterPro" id="IPR002119">
    <property type="entry name" value="Histone_H2A"/>
</dbReference>
<dbReference type="InterPro" id="IPR007125">
    <property type="entry name" value="Histone_H2A/H2B/H3"/>
</dbReference>
<dbReference type="InterPro" id="IPR032454">
    <property type="entry name" value="Histone_H2A_C"/>
</dbReference>
<dbReference type="InterPro" id="IPR032458">
    <property type="entry name" value="Histone_H2A_CS"/>
</dbReference>
<dbReference type="PANTHER" id="PTHR23430">
    <property type="entry name" value="HISTONE H2A"/>
    <property type="match status" value="1"/>
</dbReference>
<dbReference type="Pfam" id="PF00125">
    <property type="entry name" value="Histone"/>
    <property type="match status" value="1"/>
</dbReference>
<dbReference type="Pfam" id="PF16211">
    <property type="entry name" value="Histone_H2A_C"/>
    <property type="match status" value="1"/>
</dbReference>
<dbReference type="PRINTS" id="PR00620">
    <property type="entry name" value="HISTONEH2A"/>
</dbReference>
<dbReference type="SMART" id="SM00414">
    <property type="entry name" value="H2A"/>
    <property type="match status" value="1"/>
</dbReference>
<dbReference type="SUPFAM" id="SSF47113">
    <property type="entry name" value="Histone-fold"/>
    <property type="match status" value="1"/>
</dbReference>
<dbReference type="PROSITE" id="PS00046">
    <property type="entry name" value="HISTONE_H2A"/>
    <property type="match status" value="1"/>
</dbReference>
<keyword id="KW-0007">Acetylation</keyword>
<keyword id="KW-0158">Chromosome</keyword>
<keyword id="KW-0227">DNA damage</keyword>
<keyword id="KW-0234">DNA repair</keyword>
<keyword id="KW-0238">DNA-binding</keyword>
<keyword id="KW-1017">Isopeptide bond</keyword>
<keyword id="KW-0488">Methylation</keyword>
<keyword id="KW-0544">Nucleosome core</keyword>
<keyword id="KW-0539">Nucleus</keyword>
<keyword id="KW-0597">Phosphoprotein</keyword>
<keyword id="KW-1185">Reference proteome</keyword>
<keyword id="KW-0832">Ubl conjugation</keyword>
<protein>
    <recommendedName>
        <fullName>Histone H2A.1</fullName>
    </recommendedName>
</protein>
<organism>
    <name type="scientific">Eremothecium gossypii (strain ATCC 10895 / CBS 109.51 / FGSC 9923 / NRRL Y-1056)</name>
    <name type="common">Yeast</name>
    <name type="synonym">Ashbya gossypii</name>
    <dbReference type="NCBI Taxonomy" id="284811"/>
    <lineage>
        <taxon>Eukaryota</taxon>
        <taxon>Fungi</taxon>
        <taxon>Dikarya</taxon>
        <taxon>Ascomycota</taxon>
        <taxon>Saccharomycotina</taxon>
        <taxon>Saccharomycetes</taxon>
        <taxon>Saccharomycetales</taxon>
        <taxon>Saccharomycetaceae</taxon>
        <taxon>Eremothecium</taxon>
    </lineage>
</organism>
<reference key="1">
    <citation type="journal article" date="2004" name="Science">
        <title>The Ashbya gossypii genome as a tool for mapping the ancient Saccharomyces cerevisiae genome.</title>
        <authorList>
            <person name="Dietrich F.S."/>
            <person name="Voegeli S."/>
            <person name="Brachat S."/>
            <person name="Lerch A."/>
            <person name="Gates K."/>
            <person name="Steiner S."/>
            <person name="Mohr C."/>
            <person name="Poehlmann R."/>
            <person name="Luedi P."/>
            <person name="Choi S."/>
            <person name="Wing R.A."/>
            <person name="Flavier A."/>
            <person name="Gaffney T.D."/>
            <person name="Philippsen P."/>
        </authorList>
    </citation>
    <scope>NUCLEOTIDE SEQUENCE [LARGE SCALE GENOMIC DNA]</scope>
    <source>
        <strain>ATCC 10895 / CBS 109.51 / FGSC 9923 / NRRL Y-1056</strain>
    </source>
</reference>
<reference key="2">
    <citation type="journal article" date="2013" name="G3 (Bethesda)">
        <title>Genomes of Ashbya fungi isolated from insects reveal four mating-type loci, numerous translocations, lack of transposons, and distinct gene duplications.</title>
        <authorList>
            <person name="Dietrich F.S."/>
            <person name="Voegeli S."/>
            <person name="Kuo S."/>
            <person name="Philippsen P."/>
        </authorList>
    </citation>
    <scope>GENOME REANNOTATION</scope>
    <source>
        <strain>ATCC 10895 / CBS 109.51 / FGSC 9923 / NRRL Y-1056</strain>
    </source>
</reference>
<feature type="initiator methionine" description="Removed" evidence="1">
    <location>
        <position position="1"/>
    </location>
</feature>
<feature type="chain" id="PRO_0000055205" description="Histone H2A.1">
    <location>
        <begin position="2"/>
        <end position="131"/>
    </location>
</feature>
<feature type="short sequence motif" description="[ST]-Q motif">
    <location>
        <begin position="128"/>
        <end position="129"/>
    </location>
</feature>
<feature type="site" description="Not ubiquitinated" evidence="2">
    <location>
        <position position="119"/>
    </location>
</feature>
<feature type="modified residue" description="N-acetylserine" evidence="1">
    <location>
        <position position="2"/>
    </location>
</feature>
<feature type="modified residue" description="N6-acetyllysine" evidence="1">
    <location>
        <position position="4"/>
    </location>
</feature>
<feature type="modified residue" description="N6-acetyllysine" evidence="1">
    <location>
        <position position="7"/>
    </location>
</feature>
<feature type="modified residue" description="N5-methylglutamine" evidence="1">
    <location>
        <position position="105"/>
    </location>
</feature>
<feature type="modified residue" description="Phosphoserine" evidence="1">
    <location>
        <position position="128"/>
    </location>
</feature>
<feature type="cross-link" description="Glycyl lysine isopeptide (Lys-Gly) (interchain with G-Cter in SUMO)" evidence="1">
    <location>
        <position position="126"/>
    </location>
</feature>
<gene>
    <name type="primary">HTA1</name>
    <name type="ordered locus">AGR184W</name>
</gene>